<accession>P0CAQ2</accession>
<accession>A3DT45</accession>
<accession>A3DT46</accession>
<evidence type="ECO:0000250" key="1">
    <source>
        <dbReference type="UniProtKB" id="P0C1X1"/>
    </source>
</evidence>
<evidence type="ECO:0000250" key="2">
    <source>
        <dbReference type="UniProtKB" id="P0C828"/>
    </source>
</evidence>
<evidence type="ECO:0000250" key="3">
    <source>
        <dbReference type="UniProtKB" id="P0DQY7"/>
    </source>
</evidence>
<evidence type="ECO:0000303" key="4">
    <source>
    </source>
</evidence>
<evidence type="ECO:0000305" key="5"/>
<sequence>SDFRNAAVHERQKELVVTATTTCCGYNPMTSCPRCMCDSSCNKKKKPGRRND</sequence>
<feature type="propeptide" id="PRO_0000370644" evidence="1">
    <location>
        <begin position="1" status="less than"/>
        <end position="11"/>
    </location>
</feature>
<feature type="peptide" id="PRO_0000370645" description="Conotoxin Ac4.3a" evidence="1">
    <location>
        <begin position="12"/>
        <end position="47"/>
    </location>
</feature>
<feature type="propeptide" id="PRO_0000370646" evidence="1">
    <location>
        <begin position="48"/>
        <end position="52"/>
    </location>
</feature>
<feature type="modified residue" description="Pyrrolidone carboxylic acid" evidence="2">
    <location>
        <position position="12"/>
    </location>
</feature>
<feature type="modified residue" description="4-carboxyglutamate" evidence="1">
    <location>
        <position position="14"/>
    </location>
</feature>
<feature type="modified residue" description="4-hydroxyproline" evidence="1">
    <location>
        <position position="28"/>
    </location>
</feature>
<feature type="modified residue" description="4-hydroxyproline" evidence="1">
    <location>
        <position position="33"/>
    </location>
</feature>
<feature type="modified residue" description="4-hydroxyproline" evidence="1">
    <location>
        <position position="47"/>
    </location>
</feature>
<feature type="modified residue" description="Proline amide" evidence="1">
    <location>
        <position position="47"/>
    </location>
</feature>
<feature type="glycosylation site" description="O-linked (HexNAc...) threonine" evidence="1">
    <location>
        <position position="18"/>
    </location>
</feature>
<feature type="glycosylation site" description="O-linked (HexNAc...) threonine" evidence="1">
    <location>
        <position position="20"/>
    </location>
</feature>
<feature type="non-terminal residue">
    <location>
        <position position="1"/>
    </location>
</feature>
<dbReference type="EMBL" id="DQ311074">
    <property type="protein sequence ID" value="ABD33866.1"/>
    <property type="molecule type" value="Genomic_DNA"/>
</dbReference>
<dbReference type="SMR" id="P0CAQ2"/>
<dbReference type="TCDB" id="8.B.32.2.3">
    <property type="family name" value="the nicotinic acetylcholine receptor-targeting alpha-conotoxin (a-conotoxin) family"/>
</dbReference>
<dbReference type="ConoServer" id="564">
    <property type="toxin name" value="Ac4.3a precursor"/>
</dbReference>
<dbReference type="GO" id="GO:0005576">
    <property type="term" value="C:extracellular region"/>
    <property type="evidence" value="ECO:0007669"/>
    <property type="project" value="UniProtKB-SubCell"/>
</dbReference>
<dbReference type="GO" id="GO:0030550">
    <property type="term" value="F:acetylcholine receptor inhibitor activity"/>
    <property type="evidence" value="ECO:0007669"/>
    <property type="project" value="InterPro"/>
</dbReference>
<dbReference type="GO" id="GO:0099106">
    <property type="term" value="F:ion channel regulator activity"/>
    <property type="evidence" value="ECO:0007669"/>
    <property type="project" value="UniProtKB-KW"/>
</dbReference>
<dbReference type="GO" id="GO:0090729">
    <property type="term" value="F:toxin activity"/>
    <property type="evidence" value="ECO:0007669"/>
    <property type="project" value="UniProtKB-KW"/>
</dbReference>
<dbReference type="InterPro" id="IPR009958">
    <property type="entry name" value="Conotoxin_a-typ"/>
</dbReference>
<dbReference type="Pfam" id="PF07365">
    <property type="entry name" value="Toxin_8"/>
    <property type="match status" value="1"/>
</dbReference>
<proteinExistence type="inferred from homology"/>
<reference key="1">
    <citation type="journal article" date="2007" name="Toxicon">
        <title>From the identification of gene organization of alpha conotoxins to the cloning of novel toxins.</title>
        <authorList>
            <person name="Yuan D.-D."/>
            <person name="Han Y.-H."/>
            <person name="Wang C.-G."/>
            <person name="Chi C.-W."/>
        </authorList>
    </citation>
    <scope>NUCLEOTIDE SEQUENCE [GENOMIC DNA]</scope>
</reference>
<name>CA43A_CONAH</name>
<protein>
    <recommendedName>
        <fullName evidence="4">Conotoxin Ac4.3a</fullName>
    </recommendedName>
    <alternativeName>
        <fullName evidence="4">KappaA-conotoxin</fullName>
    </alternativeName>
</protein>
<keyword id="KW-0027">Amidation</keyword>
<keyword id="KW-1015">Disulfide bond</keyword>
<keyword id="KW-0301">Gamma-carboxyglutamic acid</keyword>
<keyword id="KW-0325">Glycoprotein</keyword>
<keyword id="KW-0379">Hydroxylation</keyword>
<keyword id="KW-0872">Ion channel impairing toxin</keyword>
<keyword id="KW-0528">Neurotoxin</keyword>
<keyword id="KW-0873">Pyrrolidone carboxylic acid</keyword>
<keyword id="KW-0964">Secreted</keyword>
<keyword id="KW-0800">Toxin</keyword>
<comment type="function">
    <text evidence="5">Probable neurotoxin with ion channel inhibitor activity.</text>
</comment>
<comment type="subcellular location">
    <subcellularLocation>
        <location evidence="5">Secreted</location>
    </subcellularLocation>
</comment>
<comment type="tissue specificity">
    <text evidence="5">Expressed by the venom duct.</text>
</comment>
<comment type="domain">
    <text evidence="5">The cysteine framework is IV (CC-C-C-C-C).</text>
</comment>
<comment type="PTM">
    <text evidence="3">Contains 3 disulfide bonds.</text>
</comment>
<comment type="similarity">
    <text evidence="5">Belongs to the conotoxin A superfamily.</text>
</comment>
<organism>
    <name type="scientific">Conus achatinus</name>
    <name type="common">Little frog cone</name>
    <dbReference type="NCBI Taxonomy" id="369967"/>
    <lineage>
        <taxon>Eukaryota</taxon>
        <taxon>Metazoa</taxon>
        <taxon>Spiralia</taxon>
        <taxon>Lophotrochozoa</taxon>
        <taxon>Mollusca</taxon>
        <taxon>Gastropoda</taxon>
        <taxon>Caenogastropoda</taxon>
        <taxon>Neogastropoda</taxon>
        <taxon>Conoidea</taxon>
        <taxon>Conidae</taxon>
        <taxon>Conus</taxon>
        <taxon>Pionoconus</taxon>
    </lineage>
</organism>